<comment type="function">
    <text evidence="1">Part of the RFC clamp loader complex which loads the PCNA sliding clamp onto DNA.</text>
</comment>
<comment type="similarity">
    <text evidence="3">Belongs to the activator 1 large subunit family.</text>
</comment>
<name>RFCL_MIMIV</name>
<reference key="1">
    <citation type="journal article" date="2004" name="Science">
        <title>The 1.2-megabase genome sequence of Mimivirus.</title>
        <authorList>
            <person name="Raoult D."/>
            <person name="Audic S."/>
            <person name="Robert C."/>
            <person name="Abergel C."/>
            <person name="Renesto P."/>
            <person name="Ogata H."/>
            <person name="La Scola B."/>
            <person name="Susan M."/>
            <person name="Claverie J.-M."/>
        </authorList>
    </citation>
    <scope>NUCLEOTIDE SEQUENCE [LARGE SCALE GENOMIC DNA]</scope>
    <source>
        <strain>Rowbotham-Bradford</strain>
    </source>
</reference>
<evidence type="ECO:0000250" key="1"/>
<evidence type="ECO:0000256" key="2">
    <source>
        <dbReference type="SAM" id="MobiDB-lite"/>
    </source>
</evidence>
<evidence type="ECO:0000305" key="3"/>
<organismHost>
    <name type="scientific">Acanthamoeba polyphaga</name>
    <name type="common">Amoeba</name>
    <dbReference type="NCBI Taxonomy" id="5757"/>
</organismHost>
<protein>
    <recommendedName>
        <fullName>Putative replication factor C large subunit</fullName>
        <shortName>RFC large subunit</shortName>
    </recommendedName>
    <alternativeName>
        <fullName>Clamp loader large subunit</fullName>
    </alternativeName>
</protein>
<organism>
    <name type="scientific">Acanthamoeba polyphaga mimivirus</name>
    <name type="common">APMV</name>
    <dbReference type="NCBI Taxonomy" id="212035"/>
    <lineage>
        <taxon>Viruses</taxon>
        <taxon>Varidnaviria</taxon>
        <taxon>Bamfordvirae</taxon>
        <taxon>Nucleocytoviricota</taxon>
        <taxon>Megaviricetes</taxon>
        <taxon>Imitervirales</taxon>
        <taxon>Mimiviridae</taxon>
        <taxon>Megamimivirinae</taxon>
        <taxon>Mimivirus</taxon>
        <taxon>Mimivirus bradfordmassiliense</taxon>
    </lineage>
</organism>
<dbReference type="EMBL" id="AY653733">
    <property type="protein sequence ID" value="AAV50680.1"/>
    <property type="molecule type" value="Genomic_DNA"/>
</dbReference>
<dbReference type="SMR" id="Q5UQK9"/>
<dbReference type="KEGG" id="vg:9925032"/>
<dbReference type="OrthoDB" id="28459at10239"/>
<dbReference type="Proteomes" id="UP000001134">
    <property type="component" value="Genome"/>
</dbReference>
<dbReference type="GO" id="GO:0005524">
    <property type="term" value="F:ATP binding"/>
    <property type="evidence" value="ECO:0007669"/>
    <property type="project" value="InterPro"/>
</dbReference>
<dbReference type="GO" id="GO:0003677">
    <property type="term" value="F:DNA binding"/>
    <property type="evidence" value="ECO:0007669"/>
    <property type="project" value="InterPro"/>
</dbReference>
<dbReference type="GO" id="GO:0003689">
    <property type="term" value="F:DNA clamp loader activity"/>
    <property type="evidence" value="ECO:0007669"/>
    <property type="project" value="InterPro"/>
</dbReference>
<dbReference type="GO" id="GO:0006260">
    <property type="term" value="P:DNA replication"/>
    <property type="evidence" value="ECO:0007669"/>
    <property type="project" value="UniProtKB-KW"/>
</dbReference>
<dbReference type="Gene3D" id="1.10.8.60">
    <property type="match status" value="1"/>
</dbReference>
<dbReference type="Gene3D" id="1.20.272.10">
    <property type="match status" value="1"/>
</dbReference>
<dbReference type="Gene3D" id="3.40.50.300">
    <property type="entry name" value="P-loop containing nucleotide triphosphate hydrolases"/>
    <property type="match status" value="1"/>
</dbReference>
<dbReference type="InterPro" id="IPR008921">
    <property type="entry name" value="DNA_pol3_clamp-load_cplx_C"/>
</dbReference>
<dbReference type="InterPro" id="IPR013725">
    <property type="entry name" value="DNA_replication_fac_RFC1_C"/>
</dbReference>
<dbReference type="InterPro" id="IPR027417">
    <property type="entry name" value="P-loop_NTPase"/>
</dbReference>
<dbReference type="PANTHER" id="PTHR23389">
    <property type="entry name" value="CHROMOSOME TRANSMISSION FIDELITY FACTOR 18"/>
    <property type="match status" value="1"/>
</dbReference>
<dbReference type="PANTHER" id="PTHR23389:SF6">
    <property type="entry name" value="REPLICATION FACTOR C SUBUNIT 1"/>
    <property type="match status" value="1"/>
</dbReference>
<dbReference type="Pfam" id="PF08519">
    <property type="entry name" value="RFC1"/>
    <property type="match status" value="1"/>
</dbReference>
<dbReference type="SUPFAM" id="SSF52540">
    <property type="entry name" value="P-loop containing nucleoside triphosphate hydrolases"/>
    <property type="match status" value="1"/>
</dbReference>
<dbReference type="SUPFAM" id="SSF48019">
    <property type="entry name" value="post-AAA+ oligomerization domain-like"/>
    <property type="match status" value="1"/>
</dbReference>
<gene>
    <name type="ordered locus">MIMI_R411</name>
</gene>
<accession>Q5UQK9</accession>
<proteinExistence type="inferred from homology"/>
<sequence length="533" mass="61391">MSKTAKNTKTIKSVKSVNKDNKPNKDNKDDKNVDEEVINWLDKYKPTSSSQILGDKNNINRIKAFLSQFTKENAEINCPNLILTGNNGVGKTLMTDLIIQEKGFEKITADLTNISVARKSKKKKKVEKEYNGSNRTIKTYYTTLYNKSVSPTGDLIEKKIVVVFDDVSNISNNKEKEAIKSIIKINSKEKKIPIIIIANMKHSKTVNELKKMVTVTVKNTNSQGRKENKRTSNEIIIKAPNPDEIREFIAYICRKENLKLKQRKSDDDDIYEEIIQHSQFDIRRLIYILESLKMIHGNNDVTLDEFDAYREISKTKDIDPGIYKATGTLLNDYEGISGALSLYEEERATIPLMVHENYPSNIKHQYPKMSVEDQISVIHKISESISESDKIDGLIYSNQCWSLQPVHGFYSCVLPSYFINMHPNKLRMSEIYKYTQDYNKTSIKKINNKVIKKAQENQHLKRVSIYDFLYMASILKTLLERKDFEAVATLMKPYGLKLKEIESIIKIDKIKKMKNTLTGKQKTQLKELLGVDE</sequence>
<feature type="chain" id="PRO_0000309209" description="Putative replication factor C large subunit">
    <location>
        <begin position="1"/>
        <end position="533"/>
    </location>
</feature>
<feature type="region of interest" description="Disordered" evidence="2">
    <location>
        <begin position="1"/>
        <end position="31"/>
    </location>
</feature>
<feature type="compositionally biased region" description="Polar residues" evidence="2">
    <location>
        <begin position="1"/>
        <end position="11"/>
    </location>
</feature>
<feature type="compositionally biased region" description="Basic and acidic residues" evidence="2">
    <location>
        <begin position="17"/>
        <end position="31"/>
    </location>
</feature>
<keyword id="KW-0235">DNA replication</keyword>
<keyword id="KW-1185">Reference proteome</keyword>